<organism>
    <name type="scientific">Hamiltonella defensa subsp. Acyrthosiphon pisum (strain 5AT)</name>
    <dbReference type="NCBI Taxonomy" id="572265"/>
    <lineage>
        <taxon>Bacteria</taxon>
        <taxon>Pseudomonadati</taxon>
        <taxon>Pseudomonadota</taxon>
        <taxon>Gammaproteobacteria</taxon>
        <taxon>Enterobacterales</taxon>
        <taxon>Enterobacteriaceae</taxon>
        <taxon>aphid secondary symbionts</taxon>
        <taxon>Candidatus Hamiltonella</taxon>
    </lineage>
</organism>
<feature type="chain" id="PRO_1000215065" description="Large ribosomal subunit protein uL30">
    <location>
        <begin position="1"/>
        <end position="67"/>
    </location>
</feature>
<gene>
    <name evidence="1" type="primary">rpmD</name>
    <name type="ordered locus">HDEF_1848</name>
</gene>
<name>RL30_HAMD5</name>
<accession>C4K7A0</accession>
<keyword id="KW-0687">Ribonucleoprotein</keyword>
<keyword id="KW-0689">Ribosomal protein</keyword>
<protein>
    <recommendedName>
        <fullName evidence="1">Large ribosomal subunit protein uL30</fullName>
    </recommendedName>
    <alternativeName>
        <fullName evidence="2">50S ribosomal protein L30</fullName>
    </alternativeName>
</protein>
<comment type="subunit">
    <text evidence="1">Part of the 50S ribosomal subunit.</text>
</comment>
<comment type="similarity">
    <text evidence="1">Belongs to the universal ribosomal protein uL30 family.</text>
</comment>
<evidence type="ECO:0000255" key="1">
    <source>
        <dbReference type="HAMAP-Rule" id="MF_01371"/>
    </source>
</evidence>
<evidence type="ECO:0000305" key="2"/>
<dbReference type="EMBL" id="CP001277">
    <property type="protein sequence ID" value="ACQ68443.1"/>
    <property type="molecule type" value="Genomic_DNA"/>
</dbReference>
<dbReference type="RefSeq" id="WP_015874207.1">
    <property type="nucleotide sequence ID" value="NC_012751.1"/>
</dbReference>
<dbReference type="SMR" id="C4K7A0"/>
<dbReference type="STRING" id="572265.HDEF_1848"/>
<dbReference type="GeneID" id="66261433"/>
<dbReference type="KEGG" id="hde:HDEF_1848"/>
<dbReference type="eggNOG" id="COG1841">
    <property type="taxonomic scope" value="Bacteria"/>
</dbReference>
<dbReference type="HOGENOM" id="CLU_131047_1_4_6"/>
<dbReference type="Proteomes" id="UP000002334">
    <property type="component" value="Chromosome"/>
</dbReference>
<dbReference type="GO" id="GO:0022625">
    <property type="term" value="C:cytosolic large ribosomal subunit"/>
    <property type="evidence" value="ECO:0007669"/>
    <property type="project" value="TreeGrafter"/>
</dbReference>
<dbReference type="GO" id="GO:0003735">
    <property type="term" value="F:structural constituent of ribosome"/>
    <property type="evidence" value="ECO:0007669"/>
    <property type="project" value="InterPro"/>
</dbReference>
<dbReference type="GO" id="GO:0006412">
    <property type="term" value="P:translation"/>
    <property type="evidence" value="ECO:0007669"/>
    <property type="project" value="UniProtKB-UniRule"/>
</dbReference>
<dbReference type="CDD" id="cd01658">
    <property type="entry name" value="Ribosomal_L30"/>
    <property type="match status" value="1"/>
</dbReference>
<dbReference type="FunFam" id="3.30.1390.20:FF:000001">
    <property type="entry name" value="50S ribosomal protein L30"/>
    <property type="match status" value="1"/>
</dbReference>
<dbReference type="Gene3D" id="3.30.1390.20">
    <property type="entry name" value="Ribosomal protein L30, ferredoxin-like fold domain"/>
    <property type="match status" value="1"/>
</dbReference>
<dbReference type="HAMAP" id="MF_01371_B">
    <property type="entry name" value="Ribosomal_uL30_B"/>
    <property type="match status" value="1"/>
</dbReference>
<dbReference type="InterPro" id="IPR036919">
    <property type="entry name" value="Ribo_uL30_ferredoxin-like_sf"/>
</dbReference>
<dbReference type="InterPro" id="IPR005996">
    <property type="entry name" value="Ribosomal_uL30_bac-type"/>
</dbReference>
<dbReference type="InterPro" id="IPR016082">
    <property type="entry name" value="Ribosomal_uL30_ferredoxin-like"/>
</dbReference>
<dbReference type="NCBIfam" id="TIGR01308">
    <property type="entry name" value="rpmD_bact"/>
    <property type="match status" value="1"/>
</dbReference>
<dbReference type="PANTHER" id="PTHR15892:SF2">
    <property type="entry name" value="LARGE RIBOSOMAL SUBUNIT PROTEIN UL30M"/>
    <property type="match status" value="1"/>
</dbReference>
<dbReference type="PANTHER" id="PTHR15892">
    <property type="entry name" value="MITOCHONDRIAL RIBOSOMAL PROTEIN L30"/>
    <property type="match status" value="1"/>
</dbReference>
<dbReference type="Pfam" id="PF00327">
    <property type="entry name" value="Ribosomal_L30"/>
    <property type="match status" value="1"/>
</dbReference>
<dbReference type="PIRSF" id="PIRSF002211">
    <property type="entry name" value="Ribosomal_L30_bac-type"/>
    <property type="match status" value="1"/>
</dbReference>
<dbReference type="SUPFAM" id="SSF55129">
    <property type="entry name" value="Ribosomal protein L30p/L7e"/>
    <property type="match status" value="1"/>
</dbReference>
<proteinExistence type="inferred from homology"/>
<sequence length="67" mass="7679">MRKTIKVTLIRSRIGRLPKHKATLDGLGLRRINRHVELNNTPAIRGMLNLVSYMIKVELLEEGNQCV</sequence>
<reference key="1">
    <citation type="journal article" date="2009" name="Proc. Natl. Acad. Sci. U.S.A.">
        <title>Hamiltonella defensa, genome evolution of protective bacterial endosymbiont from pathogenic ancestors.</title>
        <authorList>
            <person name="Degnan P.H."/>
            <person name="Yu Y."/>
            <person name="Sisneros N."/>
            <person name="Wing R.A."/>
            <person name="Moran N.A."/>
        </authorList>
    </citation>
    <scope>NUCLEOTIDE SEQUENCE [LARGE SCALE GENOMIC DNA]</scope>
    <source>
        <strain>5AT</strain>
    </source>
</reference>